<evidence type="ECO:0000255" key="1">
    <source>
        <dbReference type="HAMAP-Rule" id="MF_00409"/>
    </source>
</evidence>
<gene>
    <name evidence="1" type="primary">lpxK</name>
    <name type="ordered locus">RPC_4704</name>
</gene>
<feature type="chain" id="PRO_0000291235" description="Tetraacyldisaccharide 4'-kinase">
    <location>
        <begin position="1"/>
        <end position="343"/>
    </location>
</feature>
<feature type="binding site" evidence="1">
    <location>
        <begin position="51"/>
        <end position="58"/>
    </location>
    <ligand>
        <name>ATP</name>
        <dbReference type="ChEBI" id="CHEBI:30616"/>
    </ligand>
</feature>
<accession>Q20XB0</accession>
<comment type="function">
    <text evidence="1">Transfers the gamma-phosphate of ATP to the 4'-position of a tetraacyldisaccharide 1-phosphate intermediate (termed DS-1-P) to form tetraacyldisaccharide 1,4'-bis-phosphate (lipid IVA).</text>
</comment>
<comment type="catalytic activity">
    <reaction evidence="1">
        <text>a lipid A disaccharide + ATP = a lipid IVA + ADP + H(+)</text>
        <dbReference type="Rhea" id="RHEA:67840"/>
        <dbReference type="ChEBI" id="CHEBI:15378"/>
        <dbReference type="ChEBI" id="CHEBI:30616"/>
        <dbReference type="ChEBI" id="CHEBI:176343"/>
        <dbReference type="ChEBI" id="CHEBI:176425"/>
        <dbReference type="ChEBI" id="CHEBI:456216"/>
        <dbReference type="EC" id="2.7.1.130"/>
    </reaction>
</comment>
<comment type="pathway">
    <text evidence="1">Glycolipid biosynthesis; lipid IV(A) biosynthesis; lipid IV(A) from (3R)-3-hydroxytetradecanoyl-[acyl-carrier-protein] and UDP-N-acetyl-alpha-D-glucosamine: step 6/6.</text>
</comment>
<comment type="similarity">
    <text evidence="1">Belongs to the LpxK family.</text>
</comment>
<name>LPXK_RHOPB</name>
<sequence length="343" mass="35971">MREPGFWYRPPSLLSSLLRPLGAIYGAVAAHRMAQPGTAVGVPVLCIGNFHGGGAGKTPTALALARLLLELGERPVVLSRGYGGRLHGPVSVDPGRHGAADVGDEPLMMARDIPVVVARDRVAGAALARSRGASVILMDDGFQNPAVAKDAALIVIDGDRGLGNGYVIPAGPLRAPLPPQLARTDALIVVGRGRAADPVAAAVKDNGGLLLRARFLPAEASLAALCDRPVLAFAGIGDPARFFATLRTAGINVAAERVFADHHPYAKQDLAGLTEIAGRDGFTLVTTEKDLARLRSDPAHAAFARSVVPFAVTLEFDDAKALRDFVIEKLTQARDKHRRAGRS</sequence>
<reference key="1">
    <citation type="submission" date="2006-03" db="EMBL/GenBank/DDBJ databases">
        <title>Complete sequence of Rhodopseudomonas palustris BisB18.</title>
        <authorList>
            <consortium name="US DOE Joint Genome Institute"/>
            <person name="Copeland A."/>
            <person name="Lucas S."/>
            <person name="Lapidus A."/>
            <person name="Barry K."/>
            <person name="Detter J.C."/>
            <person name="Glavina del Rio T."/>
            <person name="Hammon N."/>
            <person name="Israni S."/>
            <person name="Dalin E."/>
            <person name="Tice H."/>
            <person name="Pitluck S."/>
            <person name="Chain P."/>
            <person name="Malfatti S."/>
            <person name="Shin M."/>
            <person name="Vergez L."/>
            <person name="Schmutz J."/>
            <person name="Larimer F."/>
            <person name="Land M."/>
            <person name="Hauser L."/>
            <person name="Pelletier D.A."/>
            <person name="Kyrpides N."/>
            <person name="Anderson I."/>
            <person name="Oda Y."/>
            <person name="Harwood C.S."/>
            <person name="Richardson P."/>
        </authorList>
    </citation>
    <scope>NUCLEOTIDE SEQUENCE [LARGE SCALE GENOMIC DNA]</scope>
    <source>
        <strain>BisB18</strain>
    </source>
</reference>
<keyword id="KW-0067">ATP-binding</keyword>
<keyword id="KW-0418">Kinase</keyword>
<keyword id="KW-0441">Lipid A biosynthesis</keyword>
<keyword id="KW-0444">Lipid biosynthesis</keyword>
<keyword id="KW-0443">Lipid metabolism</keyword>
<keyword id="KW-0547">Nucleotide-binding</keyword>
<keyword id="KW-0808">Transferase</keyword>
<proteinExistence type="inferred from homology"/>
<organism>
    <name type="scientific">Rhodopseudomonas palustris (strain BisB18)</name>
    <dbReference type="NCBI Taxonomy" id="316056"/>
    <lineage>
        <taxon>Bacteria</taxon>
        <taxon>Pseudomonadati</taxon>
        <taxon>Pseudomonadota</taxon>
        <taxon>Alphaproteobacteria</taxon>
        <taxon>Hyphomicrobiales</taxon>
        <taxon>Nitrobacteraceae</taxon>
        <taxon>Rhodopseudomonas</taxon>
    </lineage>
</organism>
<protein>
    <recommendedName>
        <fullName evidence="1">Tetraacyldisaccharide 4'-kinase</fullName>
        <ecNumber evidence="1">2.7.1.130</ecNumber>
    </recommendedName>
    <alternativeName>
        <fullName evidence="1">Lipid A 4'-kinase</fullName>
    </alternativeName>
</protein>
<dbReference type="EC" id="2.7.1.130" evidence="1"/>
<dbReference type="EMBL" id="CP000301">
    <property type="protein sequence ID" value="ABD90226.1"/>
    <property type="molecule type" value="Genomic_DNA"/>
</dbReference>
<dbReference type="SMR" id="Q20XB0"/>
<dbReference type="STRING" id="316056.RPC_4704"/>
<dbReference type="KEGG" id="rpc:RPC_4704"/>
<dbReference type="eggNOG" id="COG1663">
    <property type="taxonomic scope" value="Bacteria"/>
</dbReference>
<dbReference type="HOGENOM" id="CLU_038816_0_0_5"/>
<dbReference type="OrthoDB" id="9766423at2"/>
<dbReference type="UniPathway" id="UPA00359">
    <property type="reaction ID" value="UER00482"/>
</dbReference>
<dbReference type="GO" id="GO:0005886">
    <property type="term" value="C:plasma membrane"/>
    <property type="evidence" value="ECO:0007669"/>
    <property type="project" value="TreeGrafter"/>
</dbReference>
<dbReference type="GO" id="GO:0005524">
    <property type="term" value="F:ATP binding"/>
    <property type="evidence" value="ECO:0007669"/>
    <property type="project" value="UniProtKB-UniRule"/>
</dbReference>
<dbReference type="GO" id="GO:0009029">
    <property type="term" value="F:tetraacyldisaccharide 4'-kinase activity"/>
    <property type="evidence" value="ECO:0007669"/>
    <property type="project" value="UniProtKB-UniRule"/>
</dbReference>
<dbReference type="GO" id="GO:0009245">
    <property type="term" value="P:lipid A biosynthetic process"/>
    <property type="evidence" value="ECO:0007669"/>
    <property type="project" value="UniProtKB-UniRule"/>
</dbReference>
<dbReference type="GO" id="GO:0009244">
    <property type="term" value="P:lipopolysaccharide core region biosynthetic process"/>
    <property type="evidence" value="ECO:0007669"/>
    <property type="project" value="TreeGrafter"/>
</dbReference>
<dbReference type="HAMAP" id="MF_00409">
    <property type="entry name" value="LpxK"/>
    <property type="match status" value="1"/>
</dbReference>
<dbReference type="InterPro" id="IPR003758">
    <property type="entry name" value="LpxK"/>
</dbReference>
<dbReference type="InterPro" id="IPR027417">
    <property type="entry name" value="P-loop_NTPase"/>
</dbReference>
<dbReference type="NCBIfam" id="TIGR00682">
    <property type="entry name" value="lpxK"/>
    <property type="match status" value="1"/>
</dbReference>
<dbReference type="PANTHER" id="PTHR42724">
    <property type="entry name" value="TETRAACYLDISACCHARIDE 4'-KINASE"/>
    <property type="match status" value="1"/>
</dbReference>
<dbReference type="PANTHER" id="PTHR42724:SF1">
    <property type="entry name" value="TETRAACYLDISACCHARIDE 4'-KINASE, MITOCHONDRIAL-RELATED"/>
    <property type="match status" value="1"/>
</dbReference>
<dbReference type="Pfam" id="PF02606">
    <property type="entry name" value="LpxK"/>
    <property type="match status" value="1"/>
</dbReference>
<dbReference type="SUPFAM" id="SSF52540">
    <property type="entry name" value="P-loop containing nucleoside triphosphate hydrolases"/>
    <property type="match status" value="1"/>
</dbReference>